<accession>B2I9M4</accession>
<comment type="function">
    <text evidence="1">Cell wall formation. Adds enolpyruvyl to UDP-N-acetylglucosamine.</text>
</comment>
<comment type="catalytic activity">
    <reaction evidence="1">
        <text>phosphoenolpyruvate + UDP-N-acetyl-alpha-D-glucosamine = UDP-N-acetyl-3-O-(1-carboxyvinyl)-alpha-D-glucosamine + phosphate</text>
        <dbReference type="Rhea" id="RHEA:18681"/>
        <dbReference type="ChEBI" id="CHEBI:43474"/>
        <dbReference type="ChEBI" id="CHEBI:57705"/>
        <dbReference type="ChEBI" id="CHEBI:58702"/>
        <dbReference type="ChEBI" id="CHEBI:68483"/>
        <dbReference type="EC" id="2.5.1.7"/>
    </reaction>
</comment>
<comment type="pathway">
    <text evidence="1">Cell wall biogenesis; peptidoglycan biosynthesis.</text>
</comment>
<comment type="subcellular location">
    <subcellularLocation>
        <location evidence="1">Cytoplasm</location>
    </subcellularLocation>
</comment>
<comment type="similarity">
    <text evidence="1">Belongs to the EPSP synthase family. MurA subfamily.</text>
</comment>
<keyword id="KW-0131">Cell cycle</keyword>
<keyword id="KW-0132">Cell division</keyword>
<keyword id="KW-0133">Cell shape</keyword>
<keyword id="KW-0961">Cell wall biogenesis/degradation</keyword>
<keyword id="KW-0963">Cytoplasm</keyword>
<keyword id="KW-0573">Peptidoglycan synthesis</keyword>
<keyword id="KW-0670">Pyruvate</keyword>
<keyword id="KW-0808">Transferase</keyword>
<evidence type="ECO:0000255" key="1">
    <source>
        <dbReference type="HAMAP-Rule" id="MF_00111"/>
    </source>
</evidence>
<gene>
    <name evidence="1" type="primary">murA</name>
    <name type="ordered locus">XfasM23_0677</name>
</gene>
<feature type="chain" id="PRO_1000094736" description="UDP-N-acetylglucosamine 1-carboxyvinyltransferase">
    <location>
        <begin position="1"/>
        <end position="425"/>
    </location>
</feature>
<feature type="active site" description="Proton donor" evidence="1">
    <location>
        <position position="122"/>
    </location>
</feature>
<feature type="binding site" evidence="1">
    <location>
        <begin position="22"/>
        <end position="23"/>
    </location>
    <ligand>
        <name>phosphoenolpyruvate</name>
        <dbReference type="ChEBI" id="CHEBI:58702"/>
    </ligand>
</feature>
<feature type="binding site" evidence="1">
    <location>
        <position position="98"/>
    </location>
    <ligand>
        <name>UDP-N-acetyl-alpha-D-glucosamine</name>
        <dbReference type="ChEBI" id="CHEBI:57705"/>
    </ligand>
</feature>
<feature type="binding site" evidence="1">
    <location>
        <begin position="127"/>
        <end position="131"/>
    </location>
    <ligand>
        <name>UDP-N-acetyl-alpha-D-glucosamine</name>
        <dbReference type="ChEBI" id="CHEBI:57705"/>
    </ligand>
</feature>
<feature type="binding site" evidence="1">
    <location>
        <position position="313"/>
    </location>
    <ligand>
        <name>UDP-N-acetyl-alpha-D-glucosamine</name>
        <dbReference type="ChEBI" id="CHEBI:57705"/>
    </ligand>
</feature>
<feature type="binding site" evidence="1">
    <location>
        <position position="335"/>
    </location>
    <ligand>
        <name>UDP-N-acetyl-alpha-D-glucosamine</name>
        <dbReference type="ChEBI" id="CHEBI:57705"/>
    </ligand>
</feature>
<feature type="modified residue" description="2-(S-cysteinyl)pyruvic acid O-phosphothioketal" evidence="1">
    <location>
        <position position="122"/>
    </location>
</feature>
<organism>
    <name type="scientific">Xylella fastidiosa (strain M23)</name>
    <dbReference type="NCBI Taxonomy" id="405441"/>
    <lineage>
        <taxon>Bacteria</taxon>
        <taxon>Pseudomonadati</taxon>
        <taxon>Pseudomonadota</taxon>
        <taxon>Gammaproteobacteria</taxon>
        <taxon>Lysobacterales</taxon>
        <taxon>Lysobacteraceae</taxon>
        <taxon>Xylella</taxon>
    </lineage>
</organism>
<protein>
    <recommendedName>
        <fullName evidence="1">UDP-N-acetylglucosamine 1-carboxyvinyltransferase</fullName>
        <ecNumber evidence="1">2.5.1.7</ecNumber>
    </recommendedName>
    <alternativeName>
        <fullName evidence="1">Enoylpyruvate transferase</fullName>
    </alternativeName>
    <alternativeName>
        <fullName evidence="1">UDP-N-acetylglucosamine enolpyruvyl transferase</fullName>
        <shortName evidence="1">EPT</shortName>
    </alternativeName>
</protein>
<proteinExistence type="inferred from homology"/>
<name>MURA_XYLF2</name>
<sequence length="425" mass="45153">MSKIVVAGGTPLYGDVRISGAKNAVLPILCATLLADAPVEISNVPYLHDVITMINLLRELGAGVTMNEGIEAKGRSITIDPRWVRQRVVPYDLVKTMRASVLLLGPLLACYGAAEVALPGGCAIGSRPVDQHIRGLQSLGAEITVENGYIKASVSQGRLKGGRFVFDVVSVTGTENLLMAAAVAQGTSVIENAAMEPEVVDLAECLITLGARVEGAGTPRIVVEGVERLNSGQYAVLPDRIETGTFLVATAMTGGRISMQQVRPQTLDAVLGKLTEAGACIEIGADSIRLDMQGRRPCSVNLTTAPYPGFPTDMQAQFMALNCVAEGVGVIKETIFENRFMHVDELLRLGAKIQIEGHTAIVQGVERLSGAPVMATDLRASASLILAGLVAEGETIIDRIYHLDRGYENIERKLGVLGASIRRMT</sequence>
<dbReference type="EC" id="2.5.1.7" evidence="1"/>
<dbReference type="EMBL" id="CP001011">
    <property type="protein sequence ID" value="ACB92118.1"/>
    <property type="molecule type" value="Genomic_DNA"/>
</dbReference>
<dbReference type="RefSeq" id="WP_004089202.1">
    <property type="nucleotide sequence ID" value="NC_010577.1"/>
</dbReference>
<dbReference type="SMR" id="B2I9M4"/>
<dbReference type="GeneID" id="93904422"/>
<dbReference type="KEGG" id="xfn:XfasM23_0677"/>
<dbReference type="HOGENOM" id="CLU_027387_0_0_6"/>
<dbReference type="UniPathway" id="UPA00219"/>
<dbReference type="Proteomes" id="UP000001698">
    <property type="component" value="Chromosome"/>
</dbReference>
<dbReference type="GO" id="GO:0005737">
    <property type="term" value="C:cytoplasm"/>
    <property type="evidence" value="ECO:0007669"/>
    <property type="project" value="UniProtKB-SubCell"/>
</dbReference>
<dbReference type="GO" id="GO:0008760">
    <property type="term" value="F:UDP-N-acetylglucosamine 1-carboxyvinyltransferase activity"/>
    <property type="evidence" value="ECO:0007669"/>
    <property type="project" value="UniProtKB-UniRule"/>
</dbReference>
<dbReference type="GO" id="GO:0051301">
    <property type="term" value="P:cell division"/>
    <property type="evidence" value="ECO:0007669"/>
    <property type="project" value="UniProtKB-KW"/>
</dbReference>
<dbReference type="GO" id="GO:0071555">
    <property type="term" value="P:cell wall organization"/>
    <property type="evidence" value="ECO:0007669"/>
    <property type="project" value="UniProtKB-KW"/>
</dbReference>
<dbReference type="GO" id="GO:0009252">
    <property type="term" value="P:peptidoglycan biosynthetic process"/>
    <property type="evidence" value="ECO:0007669"/>
    <property type="project" value="UniProtKB-UniRule"/>
</dbReference>
<dbReference type="GO" id="GO:0008360">
    <property type="term" value="P:regulation of cell shape"/>
    <property type="evidence" value="ECO:0007669"/>
    <property type="project" value="UniProtKB-KW"/>
</dbReference>
<dbReference type="GO" id="GO:0019277">
    <property type="term" value="P:UDP-N-acetylgalactosamine biosynthetic process"/>
    <property type="evidence" value="ECO:0007669"/>
    <property type="project" value="InterPro"/>
</dbReference>
<dbReference type="CDD" id="cd01555">
    <property type="entry name" value="UdpNAET"/>
    <property type="match status" value="1"/>
</dbReference>
<dbReference type="FunFam" id="3.65.10.10:FF:000002">
    <property type="entry name" value="UDP-N-acetylglucosamine 1-carboxyvinyltransferase"/>
    <property type="match status" value="1"/>
</dbReference>
<dbReference type="Gene3D" id="3.65.10.10">
    <property type="entry name" value="Enolpyruvate transferase domain"/>
    <property type="match status" value="2"/>
</dbReference>
<dbReference type="HAMAP" id="MF_00111">
    <property type="entry name" value="MurA"/>
    <property type="match status" value="1"/>
</dbReference>
<dbReference type="InterPro" id="IPR001986">
    <property type="entry name" value="Enolpyruvate_Tfrase_dom"/>
</dbReference>
<dbReference type="InterPro" id="IPR036968">
    <property type="entry name" value="Enolpyruvate_Tfrase_sf"/>
</dbReference>
<dbReference type="InterPro" id="IPR050068">
    <property type="entry name" value="MurA_subfamily"/>
</dbReference>
<dbReference type="InterPro" id="IPR013792">
    <property type="entry name" value="RNA3'P_cycl/enolpyr_Trfase_a/b"/>
</dbReference>
<dbReference type="InterPro" id="IPR005750">
    <property type="entry name" value="UDP_GlcNAc_COvinyl_MurA"/>
</dbReference>
<dbReference type="NCBIfam" id="TIGR01072">
    <property type="entry name" value="murA"/>
    <property type="match status" value="1"/>
</dbReference>
<dbReference type="NCBIfam" id="NF006873">
    <property type="entry name" value="PRK09369.1"/>
    <property type="match status" value="1"/>
</dbReference>
<dbReference type="PANTHER" id="PTHR43783">
    <property type="entry name" value="UDP-N-ACETYLGLUCOSAMINE 1-CARBOXYVINYLTRANSFERASE"/>
    <property type="match status" value="1"/>
</dbReference>
<dbReference type="PANTHER" id="PTHR43783:SF1">
    <property type="entry name" value="UDP-N-ACETYLGLUCOSAMINE 1-CARBOXYVINYLTRANSFERASE"/>
    <property type="match status" value="1"/>
</dbReference>
<dbReference type="Pfam" id="PF00275">
    <property type="entry name" value="EPSP_synthase"/>
    <property type="match status" value="1"/>
</dbReference>
<dbReference type="SUPFAM" id="SSF55205">
    <property type="entry name" value="EPT/RTPC-like"/>
    <property type="match status" value="1"/>
</dbReference>
<reference key="1">
    <citation type="journal article" date="2010" name="J. Bacteriol.">
        <title>Whole genome sequences of two Xylella fastidiosa strains (M12 and M23) causing almond leaf scorch disease in California.</title>
        <authorList>
            <person name="Chen J."/>
            <person name="Xie G."/>
            <person name="Han S."/>
            <person name="Chertkov O."/>
            <person name="Sims D."/>
            <person name="Civerolo E.L."/>
        </authorList>
    </citation>
    <scope>NUCLEOTIDE SEQUENCE [LARGE SCALE GENOMIC DNA]</scope>
    <source>
        <strain>M23</strain>
    </source>
</reference>